<evidence type="ECO:0000255" key="1">
    <source>
        <dbReference type="PROSITE-ProRule" id="PRU00434"/>
    </source>
</evidence>
<evidence type="ECO:0000305" key="2"/>
<protein>
    <recommendedName>
        <fullName>Lantibiotic transport ATP-binding protein SrtF</fullName>
    </recommendedName>
</protein>
<sequence length="229" mass="25679">MLKIQNLKKSYGKRTILNNVNMNIPKGKVYALIGPNGAGKSTIMKILTGLVSKTSGSIIFEGREWSRRDLRKIGSIIEEPPLYKNLSAYDNMKVVTTMLGVSESTILPLLNKVGLGNIDKRPVKQFSLGMKQRLGIAISLINSPKLLILDEPTNGLDPIGIQELREIIESFKSEGMTIMISSHILSEVEHLADFIGFIYEGKIILEKEYDGSENLEELFNNQILFEKRR</sequence>
<dbReference type="EMBL" id="AE004092">
    <property type="protein sequence ID" value="AAK33968.1"/>
    <property type="molecule type" value="Genomic_DNA"/>
</dbReference>
<dbReference type="EMBL" id="CP000017">
    <property type="protein sequence ID" value="AAZ51426.1"/>
    <property type="molecule type" value="Genomic_DNA"/>
</dbReference>
<dbReference type="RefSeq" id="NP_269247.1">
    <property type="nucleotide sequence ID" value="NC_002737.2"/>
</dbReference>
<dbReference type="SMR" id="P0C0E3"/>
<dbReference type="PaxDb" id="1314-HKU360_00875"/>
<dbReference type="KEGG" id="spy:SPy_1085"/>
<dbReference type="KEGG" id="spz:M5005_Spy0808"/>
<dbReference type="PATRIC" id="fig|160490.10.peg.940"/>
<dbReference type="HOGENOM" id="CLU_000604_1_2_9"/>
<dbReference type="OMA" id="ILSEGTM"/>
<dbReference type="Proteomes" id="UP000000750">
    <property type="component" value="Chromosome"/>
</dbReference>
<dbReference type="GO" id="GO:0005524">
    <property type="term" value="F:ATP binding"/>
    <property type="evidence" value="ECO:0007669"/>
    <property type="project" value="UniProtKB-KW"/>
</dbReference>
<dbReference type="GO" id="GO:0016887">
    <property type="term" value="F:ATP hydrolysis activity"/>
    <property type="evidence" value="ECO:0007669"/>
    <property type="project" value="InterPro"/>
</dbReference>
<dbReference type="GO" id="GO:0043213">
    <property type="term" value="P:bacteriocin transport"/>
    <property type="evidence" value="ECO:0007669"/>
    <property type="project" value="UniProtKB-KW"/>
</dbReference>
<dbReference type="GO" id="GO:0015031">
    <property type="term" value="P:protein transport"/>
    <property type="evidence" value="ECO:0007669"/>
    <property type="project" value="UniProtKB-KW"/>
</dbReference>
<dbReference type="Gene3D" id="3.40.50.300">
    <property type="entry name" value="P-loop containing nucleotide triphosphate hydrolases"/>
    <property type="match status" value="1"/>
</dbReference>
<dbReference type="InterPro" id="IPR003593">
    <property type="entry name" value="AAA+_ATPase"/>
</dbReference>
<dbReference type="InterPro" id="IPR022501">
    <property type="entry name" value="ABC_Gallidermin_ATP-bd"/>
</dbReference>
<dbReference type="InterPro" id="IPR003439">
    <property type="entry name" value="ABC_transporter-like_ATP-bd"/>
</dbReference>
<dbReference type="InterPro" id="IPR017871">
    <property type="entry name" value="ABC_transporter-like_CS"/>
</dbReference>
<dbReference type="InterPro" id="IPR027417">
    <property type="entry name" value="P-loop_NTPase"/>
</dbReference>
<dbReference type="NCBIfam" id="TIGR03740">
    <property type="entry name" value="galliderm_ABC"/>
    <property type="match status" value="1"/>
</dbReference>
<dbReference type="PANTHER" id="PTHR43335">
    <property type="entry name" value="ABC TRANSPORTER, ATP-BINDING PROTEIN"/>
    <property type="match status" value="1"/>
</dbReference>
<dbReference type="PANTHER" id="PTHR43335:SF8">
    <property type="entry name" value="ABC TRANSPORTER, ATP-BINDING PROTEIN"/>
    <property type="match status" value="1"/>
</dbReference>
<dbReference type="Pfam" id="PF00005">
    <property type="entry name" value="ABC_tran"/>
    <property type="match status" value="1"/>
</dbReference>
<dbReference type="SMART" id="SM00382">
    <property type="entry name" value="AAA"/>
    <property type="match status" value="1"/>
</dbReference>
<dbReference type="SUPFAM" id="SSF52540">
    <property type="entry name" value="P-loop containing nucleoside triphosphate hydrolases"/>
    <property type="match status" value="1"/>
</dbReference>
<dbReference type="PROSITE" id="PS00211">
    <property type="entry name" value="ABC_TRANSPORTER_1"/>
    <property type="match status" value="1"/>
</dbReference>
<dbReference type="PROSITE" id="PS50893">
    <property type="entry name" value="ABC_TRANSPORTER_2"/>
    <property type="match status" value="1"/>
</dbReference>
<comment type="function">
    <text evidence="2">Implicated in the export process of the lantibiotic SrtA.</text>
</comment>
<comment type="similarity">
    <text evidence="2">Belongs to the ABC transporter superfamily.</text>
</comment>
<organism>
    <name type="scientific">Streptococcus pyogenes serotype M1</name>
    <dbReference type="NCBI Taxonomy" id="301447"/>
    <lineage>
        <taxon>Bacteria</taxon>
        <taxon>Bacillati</taxon>
        <taxon>Bacillota</taxon>
        <taxon>Bacilli</taxon>
        <taxon>Lactobacillales</taxon>
        <taxon>Streptococcaceae</taxon>
        <taxon>Streptococcus</taxon>
    </lineage>
</organism>
<keyword id="KW-0067">ATP-binding</keyword>
<keyword id="KW-0080">Bacteriocin transport</keyword>
<keyword id="KW-0547">Nucleotide-binding</keyword>
<keyword id="KW-0653">Protein transport</keyword>
<keyword id="KW-1185">Reference proteome</keyword>
<keyword id="KW-0813">Transport</keyword>
<proteinExistence type="inferred from homology"/>
<accession>P0C0E3</accession>
<accession>Q48YZ2</accession>
<accession>Q9FDU7</accession>
<reference key="1">
    <citation type="journal article" date="2001" name="Proc. Natl. Acad. Sci. U.S.A.">
        <title>Complete genome sequence of an M1 strain of Streptococcus pyogenes.</title>
        <authorList>
            <person name="Ferretti J.J."/>
            <person name="McShan W.M."/>
            <person name="Ajdic D.J."/>
            <person name="Savic D.J."/>
            <person name="Savic G."/>
            <person name="Lyon K."/>
            <person name="Primeaux C."/>
            <person name="Sezate S."/>
            <person name="Suvorov A.N."/>
            <person name="Kenton S."/>
            <person name="Lai H.S."/>
            <person name="Lin S.P."/>
            <person name="Qian Y."/>
            <person name="Jia H.G."/>
            <person name="Najar F.Z."/>
            <person name="Ren Q."/>
            <person name="Zhu H."/>
            <person name="Song L."/>
            <person name="White J."/>
            <person name="Yuan X."/>
            <person name="Clifton S.W."/>
            <person name="Roe B.A."/>
            <person name="McLaughlin R.E."/>
        </authorList>
    </citation>
    <scope>NUCLEOTIDE SEQUENCE [LARGE SCALE GENOMIC DNA]</scope>
    <source>
        <strain>ATCC 700294 / SF370 / Serotype M1</strain>
    </source>
</reference>
<reference key="2">
    <citation type="journal article" date="2005" name="J. Infect. Dis.">
        <title>Evolutionary origin and emergence of a highly successful clone of serotype M1 group A Streptococcus involved multiple horizontal gene transfer events.</title>
        <authorList>
            <person name="Sumby P."/>
            <person name="Porcella S.F."/>
            <person name="Madrigal A.G."/>
            <person name="Barbian K.D."/>
            <person name="Virtaneva K."/>
            <person name="Ricklefs S.M."/>
            <person name="Sturdevant D.E."/>
            <person name="Graham M.R."/>
            <person name="Vuopio-Varkila J."/>
            <person name="Hoe N.P."/>
            <person name="Musser J.M."/>
        </authorList>
    </citation>
    <scope>NUCLEOTIDE SEQUENCE [LARGE SCALE GENOMIC DNA]</scope>
    <source>
        <strain>ATCC BAA-947 / MGAS5005 / Serotype M1</strain>
    </source>
</reference>
<feature type="chain" id="PRO_0000092979" description="Lantibiotic transport ATP-binding protein SrtF">
    <location>
        <begin position="1"/>
        <end position="229"/>
    </location>
</feature>
<feature type="domain" description="ABC transporter" evidence="1">
    <location>
        <begin position="2"/>
        <end position="225"/>
    </location>
</feature>
<feature type="binding site" evidence="1">
    <location>
        <begin position="34"/>
        <end position="41"/>
    </location>
    <ligand>
        <name>ATP</name>
        <dbReference type="ChEBI" id="CHEBI:30616"/>
    </ligand>
</feature>
<gene>
    <name type="primary">srtF</name>
    <name type="ordered locus">SPy_1085</name>
    <name type="ordered locus">M5005_Spy0808</name>
</gene>
<name>SRTF_STRP1</name>